<organism>
    <name type="scientific">Eremothecium gossypii (strain ATCC 10895 / CBS 109.51 / FGSC 9923 / NRRL Y-1056)</name>
    <name type="common">Yeast</name>
    <name type="synonym">Ashbya gossypii</name>
    <dbReference type="NCBI Taxonomy" id="284811"/>
    <lineage>
        <taxon>Eukaryota</taxon>
        <taxon>Fungi</taxon>
        <taxon>Dikarya</taxon>
        <taxon>Ascomycota</taxon>
        <taxon>Saccharomycotina</taxon>
        <taxon>Saccharomycetes</taxon>
        <taxon>Saccharomycetales</taxon>
        <taxon>Saccharomycetaceae</taxon>
        <taxon>Eremothecium</taxon>
    </lineage>
</organism>
<gene>
    <name type="primary">MIA40</name>
    <name type="synonym">TIM40</name>
    <name type="ordered locus">AER108C</name>
</gene>
<comment type="function">
    <text evidence="1">Required for the import and folding of small cysteine-containing proteins (small Tim) in the mitochondrial intermembrane space (IMS). Forms a redox cycle with ERV1 that involves a disulfide relay system. Precursor proteins to be imported into the IMS are translocated in their reduced form into the mitochondria. The oxidized form of MIA40 forms a transient intermolecular disulfide bridge with the reduced precursor protein, resulting in oxidation of the precursor protein that now contains an intramolecular disulfide bond and is able to undergo folding in the IMS (By similarity).</text>
</comment>
<comment type="cofactor">
    <cofactor evidence="1">
        <name>Cu(2+)</name>
        <dbReference type="ChEBI" id="CHEBI:29036"/>
    </cofactor>
    <cofactor evidence="1">
        <name>Zn(2+)</name>
        <dbReference type="ChEBI" id="CHEBI:29105"/>
    </cofactor>
    <text evidence="1">Cu(2+) or Zn(2+).</text>
</comment>
<comment type="subunit">
    <text evidence="1">Monomer.</text>
</comment>
<comment type="subcellular location">
    <subcellularLocation>
        <location evidence="1">Mitochondrion inner membrane</location>
        <topology evidence="1">Single-pass type II membrane protein</topology>
        <orientation evidence="1">Intermembrane side</orientation>
    </subcellularLocation>
</comment>
<comment type="domain">
    <text evidence="1">The CHCH domain contains a conserved twin Cys-X(9)-Cys motif which is required for import and stability of MIA40 in mitochondria.</text>
</comment>
<evidence type="ECO:0000250" key="1"/>
<evidence type="ECO:0000255" key="2"/>
<evidence type="ECO:0000255" key="3">
    <source>
        <dbReference type="PROSITE-ProRule" id="PRU01150"/>
    </source>
</evidence>
<evidence type="ECO:0000256" key="4">
    <source>
        <dbReference type="SAM" id="MobiDB-lite"/>
    </source>
</evidence>
<sequence>MFRQVSVRALRRAAGRSVCASRAQMVRHSSTLGGGKGSYNLDMPALALAAGVTLLAGYMVYPRAPKAKQAAVQSVAPVNENVEQASASLQASAPVQATSESAEAGEEEAYGEESGAVNEEAAGEPEEAAAEVGETQAEQAPAVETEQAAEAEQAAEAAAEDKASAGEAAQGQQGAYNPDTGEINWDCPCLGGMAHGPCGEEFKAAFACFVYSEAEPKGIDCVEKFQVMQDCFRQHPEHYAEQLESEEQAVRETEAAAESAKSDEGH</sequence>
<reference key="1">
    <citation type="journal article" date="2004" name="Science">
        <title>The Ashbya gossypii genome as a tool for mapping the ancient Saccharomyces cerevisiae genome.</title>
        <authorList>
            <person name="Dietrich F.S."/>
            <person name="Voegeli S."/>
            <person name="Brachat S."/>
            <person name="Lerch A."/>
            <person name="Gates K."/>
            <person name="Steiner S."/>
            <person name="Mohr C."/>
            <person name="Poehlmann R."/>
            <person name="Luedi P."/>
            <person name="Choi S."/>
            <person name="Wing R.A."/>
            <person name="Flavier A."/>
            <person name="Gaffney T.D."/>
            <person name="Philippsen P."/>
        </authorList>
    </citation>
    <scope>NUCLEOTIDE SEQUENCE [LARGE SCALE GENOMIC DNA]</scope>
    <source>
        <strain>ATCC 10895 / CBS 109.51 / FGSC 9923 / NRRL Y-1056</strain>
    </source>
</reference>
<reference key="2">
    <citation type="journal article" date="2013" name="G3 (Bethesda)">
        <title>Genomes of Ashbya fungi isolated from insects reveal four mating-type loci, numerous translocations, lack of transposons, and distinct gene duplications.</title>
        <authorList>
            <person name="Dietrich F.S."/>
            <person name="Voegeli S."/>
            <person name="Kuo S."/>
            <person name="Philippsen P."/>
        </authorList>
    </citation>
    <scope>GENOME REANNOTATION</scope>
    <source>
        <strain>ATCC 10895 / CBS 109.51 / FGSC 9923 / NRRL Y-1056</strain>
    </source>
</reference>
<protein>
    <recommendedName>
        <fullName>Mitochondrial intermembrane space import and assembly protein 40</fullName>
    </recommendedName>
    <alternativeName>
        <fullName>Mitochondrial import inner membrane translocase TIM40</fullName>
    </alternativeName>
</protein>
<keyword id="KW-1015">Disulfide bond</keyword>
<keyword id="KW-0472">Membrane</keyword>
<keyword id="KW-0496">Mitochondrion</keyword>
<keyword id="KW-0999">Mitochondrion inner membrane</keyword>
<keyword id="KW-0560">Oxidoreductase</keyword>
<keyword id="KW-0653">Protein transport</keyword>
<keyword id="KW-0676">Redox-active center</keyword>
<keyword id="KW-1185">Reference proteome</keyword>
<keyword id="KW-0735">Signal-anchor</keyword>
<keyword id="KW-0809">Transit peptide</keyword>
<keyword id="KW-0811">Translocation</keyword>
<keyword id="KW-0812">Transmembrane</keyword>
<keyword id="KW-1133">Transmembrane helix</keyword>
<keyword id="KW-0813">Transport</keyword>
<feature type="transit peptide" description="Mitochondrion" evidence="2">
    <location>
        <begin position="1"/>
        <end position="28"/>
    </location>
</feature>
<feature type="chain" id="PRO_0000235282" description="Mitochondrial intermembrane space import and assembly protein 40">
    <location>
        <begin position="29"/>
        <end position="266"/>
    </location>
</feature>
<feature type="topological domain" description="Mitochondrial matrix" evidence="2">
    <location>
        <begin position="29"/>
        <end position="44"/>
    </location>
</feature>
<feature type="transmembrane region" description="Helical; Signal-anchor for type II membrane protein" evidence="2">
    <location>
        <begin position="45"/>
        <end position="61"/>
    </location>
</feature>
<feature type="topological domain" description="Mitochondrial intermembrane" evidence="2">
    <location>
        <begin position="62"/>
        <end position="266"/>
    </location>
</feature>
<feature type="domain" description="CHCH" evidence="3">
    <location>
        <begin position="195"/>
        <end position="239"/>
    </location>
</feature>
<feature type="region of interest" description="Disordered" evidence="4">
    <location>
        <begin position="87"/>
        <end position="180"/>
    </location>
</feature>
<feature type="region of interest" description="Disordered" evidence="4">
    <location>
        <begin position="242"/>
        <end position="266"/>
    </location>
</feature>
<feature type="short sequence motif" description="Cx9C motif 1" evidence="3">
    <location>
        <begin position="198"/>
        <end position="208"/>
    </location>
</feature>
<feature type="short sequence motif" description="Cx9C motif 2" evidence="3">
    <location>
        <begin position="221"/>
        <end position="231"/>
    </location>
</feature>
<feature type="compositionally biased region" description="Polar residues" evidence="4">
    <location>
        <begin position="87"/>
        <end position="98"/>
    </location>
</feature>
<feature type="compositionally biased region" description="Low complexity" evidence="4">
    <location>
        <begin position="130"/>
        <end position="157"/>
    </location>
</feature>
<feature type="compositionally biased region" description="Low complexity" evidence="4">
    <location>
        <begin position="165"/>
        <end position="175"/>
    </location>
</feature>
<feature type="compositionally biased region" description="Basic and acidic residues" evidence="4">
    <location>
        <begin position="248"/>
        <end position="266"/>
    </location>
</feature>
<feature type="disulfide bond" description="Redox-active" evidence="1">
    <location>
        <begin position="187"/>
        <end position="189"/>
    </location>
</feature>
<feature type="disulfide bond" evidence="3">
    <location>
        <begin position="198"/>
        <end position="231"/>
    </location>
</feature>
<feature type="disulfide bond" evidence="3">
    <location>
        <begin position="208"/>
        <end position="221"/>
    </location>
</feature>
<proteinExistence type="inferred from homology"/>
<name>MIA40_EREGS</name>
<dbReference type="EMBL" id="AE016818">
    <property type="protein sequence ID" value="AAS52792.1"/>
    <property type="molecule type" value="Genomic_DNA"/>
</dbReference>
<dbReference type="RefSeq" id="NP_984968.1">
    <property type="nucleotide sequence ID" value="NM_210322.1"/>
</dbReference>
<dbReference type="SMR" id="Q757A5"/>
<dbReference type="STRING" id="284811.Q757A5"/>
<dbReference type="EnsemblFungi" id="AAS52792">
    <property type="protein sequence ID" value="AAS52792"/>
    <property type="gene ID" value="AGOS_AER108C"/>
</dbReference>
<dbReference type="GeneID" id="4621173"/>
<dbReference type="KEGG" id="ago:AGOS_AER108C"/>
<dbReference type="eggNOG" id="KOG4149">
    <property type="taxonomic scope" value="Eukaryota"/>
</dbReference>
<dbReference type="HOGENOM" id="CLU_054990_1_3_1"/>
<dbReference type="InParanoid" id="Q757A5"/>
<dbReference type="OrthoDB" id="7481291at2759"/>
<dbReference type="Proteomes" id="UP000000591">
    <property type="component" value="Chromosome V"/>
</dbReference>
<dbReference type="GO" id="GO:0005743">
    <property type="term" value="C:mitochondrial inner membrane"/>
    <property type="evidence" value="ECO:0007669"/>
    <property type="project" value="UniProtKB-SubCell"/>
</dbReference>
<dbReference type="GO" id="GO:0005758">
    <property type="term" value="C:mitochondrial intermembrane space"/>
    <property type="evidence" value="ECO:0000318"/>
    <property type="project" value="GO_Central"/>
</dbReference>
<dbReference type="GO" id="GO:0015035">
    <property type="term" value="F:protein-disulfide reductase activity"/>
    <property type="evidence" value="ECO:0000318"/>
    <property type="project" value="GO_Central"/>
</dbReference>
<dbReference type="GO" id="GO:0045041">
    <property type="term" value="P:protein import into mitochondrial intermembrane space"/>
    <property type="evidence" value="ECO:0000318"/>
    <property type="project" value="GO_Central"/>
</dbReference>
<dbReference type="FunFam" id="1.10.287.2900:FF:000002">
    <property type="entry name" value="Mitochondrial intermembrane space import and assembly protein"/>
    <property type="match status" value="1"/>
</dbReference>
<dbReference type="Gene3D" id="1.10.287.2900">
    <property type="match status" value="1"/>
</dbReference>
<dbReference type="InterPro" id="IPR010625">
    <property type="entry name" value="CHCH"/>
</dbReference>
<dbReference type="InterPro" id="IPR039289">
    <property type="entry name" value="CHCHD4"/>
</dbReference>
<dbReference type="InterPro" id="IPR012891">
    <property type="entry name" value="GCK_dom"/>
</dbReference>
<dbReference type="PANTHER" id="PTHR21622">
    <property type="entry name" value="COILED-COIL-HELIX-COILED-COIL-HELIX DOMAIN CONTAINING 4"/>
    <property type="match status" value="1"/>
</dbReference>
<dbReference type="PANTHER" id="PTHR21622:SF0">
    <property type="entry name" value="COILED-COIL-HELIX-COILED-COIL-HELIX DOMAIN CONTAINING 4"/>
    <property type="match status" value="1"/>
</dbReference>
<dbReference type="Pfam" id="PF06747">
    <property type="entry name" value="CHCH"/>
    <property type="match status" value="1"/>
</dbReference>
<dbReference type="SMART" id="SM01227">
    <property type="entry name" value="GCK"/>
    <property type="match status" value="1"/>
</dbReference>
<dbReference type="PROSITE" id="PS51808">
    <property type="entry name" value="CHCH"/>
    <property type="match status" value="1"/>
</dbReference>
<accession>Q757A5</accession>